<organism>
    <name type="scientific">Listeria welshimeri serovar 6b (strain ATCC 35897 / DSM 20650 / CCUG 15529 / CIP 8149 / NCTC 11857 / SLCC 5334 / V8)</name>
    <dbReference type="NCBI Taxonomy" id="386043"/>
    <lineage>
        <taxon>Bacteria</taxon>
        <taxon>Bacillati</taxon>
        <taxon>Bacillota</taxon>
        <taxon>Bacilli</taxon>
        <taxon>Bacillales</taxon>
        <taxon>Listeriaceae</taxon>
        <taxon>Listeria</taxon>
    </lineage>
</organism>
<comment type="function">
    <text evidence="1">Catalyzes the reversible interconversion of serine and glycine with tetrahydrofolate (THF) serving as the one-carbon carrier. This reaction serves as the major source of one-carbon groups required for the biosynthesis of purines, thymidylate, methionine, and other important biomolecules. Also exhibits THF-independent aldolase activity toward beta-hydroxyamino acids, producing glycine and aldehydes, via a retro-aldol mechanism.</text>
</comment>
<comment type="catalytic activity">
    <reaction evidence="1">
        <text>(6R)-5,10-methylene-5,6,7,8-tetrahydrofolate + glycine + H2O = (6S)-5,6,7,8-tetrahydrofolate + L-serine</text>
        <dbReference type="Rhea" id="RHEA:15481"/>
        <dbReference type="ChEBI" id="CHEBI:15377"/>
        <dbReference type="ChEBI" id="CHEBI:15636"/>
        <dbReference type="ChEBI" id="CHEBI:33384"/>
        <dbReference type="ChEBI" id="CHEBI:57305"/>
        <dbReference type="ChEBI" id="CHEBI:57453"/>
        <dbReference type="EC" id="2.1.2.1"/>
    </reaction>
</comment>
<comment type="cofactor">
    <cofactor evidence="1">
        <name>pyridoxal 5'-phosphate</name>
        <dbReference type="ChEBI" id="CHEBI:597326"/>
    </cofactor>
</comment>
<comment type="pathway">
    <text evidence="1">One-carbon metabolism; tetrahydrofolate interconversion.</text>
</comment>
<comment type="pathway">
    <text evidence="1">Amino-acid biosynthesis; glycine biosynthesis; glycine from L-serine: step 1/1.</text>
</comment>
<comment type="subunit">
    <text evidence="1">Homodimer.</text>
</comment>
<comment type="subcellular location">
    <subcellularLocation>
        <location evidence="1">Cytoplasm</location>
    </subcellularLocation>
</comment>
<comment type="similarity">
    <text evidence="1">Belongs to the SHMT family.</text>
</comment>
<reference key="1">
    <citation type="journal article" date="2006" name="J. Bacteriol.">
        <title>Whole-genome sequence of Listeria welshimeri reveals common steps in genome reduction with Listeria innocua as compared to Listeria monocytogenes.</title>
        <authorList>
            <person name="Hain T."/>
            <person name="Steinweg C."/>
            <person name="Kuenne C.T."/>
            <person name="Billion A."/>
            <person name="Ghai R."/>
            <person name="Chatterjee S.S."/>
            <person name="Domann E."/>
            <person name="Kaerst U."/>
            <person name="Goesmann A."/>
            <person name="Bekel T."/>
            <person name="Bartels D."/>
            <person name="Kaiser O."/>
            <person name="Meyer F."/>
            <person name="Puehler A."/>
            <person name="Weisshaar B."/>
            <person name="Wehland J."/>
            <person name="Liang C."/>
            <person name="Dandekar T."/>
            <person name="Lampidis R."/>
            <person name="Kreft J."/>
            <person name="Goebel W."/>
            <person name="Chakraborty T."/>
        </authorList>
    </citation>
    <scope>NUCLEOTIDE SEQUENCE [LARGE SCALE GENOMIC DNA]</scope>
    <source>
        <strain>ATCC 35897 / DSM 20650 / CCUG 15529 / CIP 8149 / NCTC 11857 / SLCC 5334 / V8</strain>
    </source>
</reference>
<gene>
    <name evidence="1" type="primary">glyA</name>
    <name type="ordered locus">lwe2488</name>
</gene>
<sequence>MVYLQKQDKEVFDAIKLELGRQRANIELIASENFVSEQVMEAMGSVLTNKYAEGYPGKRYYGGCEFVDIVEDLARDRAKKLFGAEYANVQPHSGAQANMAVYHAVLEPGDTVLGMNLSHGGHLTHGSPVNFSGVLYNFVEYGVREDTKEIDYDIVREAALKHKPKMIVAGASAYPRKIDFAKFREIADEVGAYLMVDMAHIAGLVAAGLHQNPVPYADFTTTTTHKTLRGPRGGMILAKAEWEQKLNKSIFPGIQGGPLMHVIAAKAVAFGEALQPEFTTYCEQIIRNSKKLAETLQAHDVTVLTGGSDNHLLLIDLKPLSLTGKAVEKVLDEVGITVNKNTIPFETESPFVTSGIRVGVAAVTTRGFDEVAIEKVGVLISEVLHNIENEEVLADVKARVATLTNEYPLYPSL</sequence>
<feature type="chain" id="PRO_1000006279" description="Serine hydroxymethyltransferase">
    <location>
        <begin position="1"/>
        <end position="413"/>
    </location>
</feature>
<feature type="binding site" evidence="1">
    <location>
        <position position="117"/>
    </location>
    <ligand>
        <name>(6S)-5,6,7,8-tetrahydrofolate</name>
        <dbReference type="ChEBI" id="CHEBI:57453"/>
    </ligand>
</feature>
<feature type="binding site" evidence="1">
    <location>
        <begin position="121"/>
        <end position="123"/>
    </location>
    <ligand>
        <name>(6S)-5,6,7,8-tetrahydrofolate</name>
        <dbReference type="ChEBI" id="CHEBI:57453"/>
    </ligand>
</feature>
<feature type="binding site" evidence="1">
    <location>
        <begin position="349"/>
        <end position="351"/>
    </location>
    <ligand>
        <name>(6S)-5,6,7,8-tetrahydrofolate</name>
        <dbReference type="ChEBI" id="CHEBI:57453"/>
    </ligand>
</feature>
<feature type="site" description="Plays an important role in substrate specificity" evidence="1">
    <location>
        <position position="225"/>
    </location>
</feature>
<feature type="modified residue" description="N6-(pyridoxal phosphate)lysine" evidence="1">
    <location>
        <position position="226"/>
    </location>
</feature>
<accession>A0ALM4</accession>
<protein>
    <recommendedName>
        <fullName evidence="1">Serine hydroxymethyltransferase</fullName>
        <shortName evidence="1">SHMT</shortName>
        <shortName evidence="1">Serine methylase</shortName>
        <ecNumber evidence="1">2.1.2.1</ecNumber>
    </recommendedName>
</protein>
<name>GLYA_LISW6</name>
<dbReference type="EC" id="2.1.2.1" evidence="1"/>
<dbReference type="EMBL" id="AM263198">
    <property type="protein sequence ID" value="CAK21906.1"/>
    <property type="molecule type" value="Genomic_DNA"/>
</dbReference>
<dbReference type="RefSeq" id="WP_011703217.1">
    <property type="nucleotide sequence ID" value="NC_008555.1"/>
</dbReference>
<dbReference type="SMR" id="A0ALM4"/>
<dbReference type="STRING" id="386043.lwe2488"/>
<dbReference type="GeneID" id="61190407"/>
<dbReference type="KEGG" id="lwe:lwe2488"/>
<dbReference type="eggNOG" id="COG0112">
    <property type="taxonomic scope" value="Bacteria"/>
</dbReference>
<dbReference type="HOGENOM" id="CLU_022477_2_1_9"/>
<dbReference type="OrthoDB" id="9803846at2"/>
<dbReference type="UniPathway" id="UPA00193"/>
<dbReference type="UniPathway" id="UPA00288">
    <property type="reaction ID" value="UER01023"/>
</dbReference>
<dbReference type="Proteomes" id="UP000000779">
    <property type="component" value="Chromosome"/>
</dbReference>
<dbReference type="GO" id="GO:0005829">
    <property type="term" value="C:cytosol"/>
    <property type="evidence" value="ECO:0007669"/>
    <property type="project" value="TreeGrafter"/>
</dbReference>
<dbReference type="GO" id="GO:0004372">
    <property type="term" value="F:glycine hydroxymethyltransferase activity"/>
    <property type="evidence" value="ECO:0007669"/>
    <property type="project" value="UniProtKB-UniRule"/>
</dbReference>
<dbReference type="GO" id="GO:0030170">
    <property type="term" value="F:pyridoxal phosphate binding"/>
    <property type="evidence" value="ECO:0007669"/>
    <property type="project" value="UniProtKB-UniRule"/>
</dbReference>
<dbReference type="GO" id="GO:0019264">
    <property type="term" value="P:glycine biosynthetic process from serine"/>
    <property type="evidence" value="ECO:0007669"/>
    <property type="project" value="UniProtKB-UniRule"/>
</dbReference>
<dbReference type="GO" id="GO:0035999">
    <property type="term" value="P:tetrahydrofolate interconversion"/>
    <property type="evidence" value="ECO:0007669"/>
    <property type="project" value="UniProtKB-UniRule"/>
</dbReference>
<dbReference type="CDD" id="cd00378">
    <property type="entry name" value="SHMT"/>
    <property type="match status" value="1"/>
</dbReference>
<dbReference type="FunFam" id="3.40.640.10:FF:000001">
    <property type="entry name" value="Serine hydroxymethyltransferase"/>
    <property type="match status" value="1"/>
</dbReference>
<dbReference type="Gene3D" id="3.90.1150.10">
    <property type="entry name" value="Aspartate Aminotransferase, domain 1"/>
    <property type="match status" value="1"/>
</dbReference>
<dbReference type="Gene3D" id="3.40.640.10">
    <property type="entry name" value="Type I PLP-dependent aspartate aminotransferase-like (Major domain)"/>
    <property type="match status" value="1"/>
</dbReference>
<dbReference type="HAMAP" id="MF_00051">
    <property type="entry name" value="SHMT"/>
    <property type="match status" value="1"/>
</dbReference>
<dbReference type="InterPro" id="IPR015424">
    <property type="entry name" value="PyrdxlP-dep_Trfase"/>
</dbReference>
<dbReference type="InterPro" id="IPR015421">
    <property type="entry name" value="PyrdxlP-dep_Trfase_major"/>
</dbReference>
<dbReference type="InterPro" id="IPR015422">
    <property type="entry name" value="PyrdxlP-dep_Trfase_small"/>
</dbReference>
<dbReference type="InterPro" id="IPR001085">
    <property type="entry name" value="Ser_HO-MeTrfase"/>
</dbReference>
<dbReference type="InterPro" id="IPR049943">
    <property type="entry name" value="Ser_HO-MeTrfase-like"/>
</dbReference>
<dbReference type="InterPro" id="IPR019798">
    <property type="entry name" value="Ser_HO-MeTrfase_PLP_BS"/>
</dbReference>
<dbReference type="InterPro" id="IPR039429">
    <property type="entry name" value="SHMT-like_dom"/>
</dbReference>
<dbReference type="NCBIfam" id="NF000586">
    <property type="entry name" value="PRK00011.1"/>
    <property type="match status" value="1"/>
</dbReference>
<dbReference type="PANTHER" id="PTHR11680">
    <property type="entry name" value="SERINE HYDROXYMETHYLTRANSFERASE"/>
    <property type="match status" value="1"/>
</dbReference>
<dbReference type="PANTHER" id="PTHR11680:SF35">
    <property type="entry name" value="SERINE HYDROXYMETHYLTRANSFERASE 1"/>
    <property type="match status" value="1"/>
</dbReference>
<dbReference type="Pfam" id="PF00464">
    <property type="entry name" value="SHMT"/>
    <property type="match status" value="1"/>
</dbReference>
<dbReference type="PIRSF" id="PIRSF000412">
    <property type="entry name" value="SHMT"/>
    <property type="match status" value="1"/>
</dbReference>
<dbReference type="SUPFAM" id="SSF53383">
    <property type="entry name" value="PLP-dependent transferases"/>
    <property type="match status" value="1"/>
</dbReference>
<dbReference type="PROSITE" id="PS00096">
    <property type="entry name" value="SHMT"/>
    <property type="match status" value="1"/>
</dbReference>
<proteinExistence type="inferred from homology"/>
<evidence type="ECO:0000255" key="1">
    <source>
        <dbReference type="HAMAP-Rule" id="MF_00051"/>
    </source>
</evidence>
<keyword id="KW-0028">Amino-acid biosynthesis</keyword>
<keyword id="KW-0963">Cytoplasm</keyword>
<keyword id="KW-0554">One-carbon metabolism</keyword>
<keyword id="KW-0663">Pyridoxal phosphate</keyword>
<keyword id="KW-0808">Transferase</keyword>